<dbReference type="EC" id="2.3.1.-" evidence="8"/>
<dbReference type="EMBL" id="AC008030">
    <property type="protein sequence ID" value="AAG10607.1"/>
    <property type="status" value="ALT_SEQ"/>
    <property type="molecule type" value="Genomic_DNA"/>
</dbReference>
<dbReference type="EMBL" id="CP002684">
    <property type="protein sequence ID" value="AEE31146.1"/>
    <property type="molecule type" value="Genomic_DNA"/>
</dbReference>
<dbReference type="EMBL" id="CP002684">
    <property type="protein sequence ID" value="AEE31147.1"/>
    <property type="molecule type" value="Genomic_DNA"/>
</dbReference>
<dbReference type="EMBL" id="BX814013">
    <property type="status" value="NOT_ANNOTATED_CDS"/>
    <property type="molecule type" value="mRNA"/>
</dbReference>
<dbReference type="PIR" id="E86422">
    <property type="entry name" value="E86422"/>
</dbReference>
<dbReference type="RefSeq" id="NP_001031111.1">
    <molecule id="Q9FXG3-3"/>
    <property type="nucleotide sequence ID" value="NM_001036034.2"/>
</dbReference>
<dbReference type="RefSeq" id="NP_174282.2">
    <molecule id="Q9FXG3-2"/>
    <property type="nucleotide sequence ID" value="NM_102729.3"/>
</dbReference>
<dbReference type="FunCoup" id="Q9FXG3">
    <property type="interactions" value="1930"/>
</dbReference>
<dbReference type="STRING" id="3702.Q9FXG3"/>
<dbReference type="GlyCosmos" id="Q9FXG3">
    <property type="glycosylation" value="1 site, No reported glycans"/>
</dbReference>
<dbReference type="GlyGen" id="Q9FXG3">
    <property type="glycosylation" value="2 sites"/>
</dbReference>
<dbReference type="iPTMnet" id="Q9FXG3"/>
<dbReference type="PaxDb" id="3702-AT1G29890.2"/>
<dbReference type="ProteomicsDB" id="232863">
    <molecule id="Q9FXG3-1"/>
</dbReference>
<dbReference type="EnsemblPlants" id="AT1G29890.1">
    <molecule id="Q9FXG3-2"/>
    <property type="protein sequence ID" value="AT1G29890.1"/>
    <property type="gene ID" value="AT1G29890"/>
</dbReference>
<dbReference type="EnsemblPlants" id="AT1G29890.2">
    <molecule id="Q9FXG3-3"/>
    <property type="protein sequence ID" value="AT1G29890.2"/>
    <property type="gene ID" value="AT1G29890"/>
</dbReference>
<dbReference type="GeneID" id="839867"/>
<dbReference type="Gramene" id="AT1G29890.1">
    <molecule id="Q9FXG3-2"/>
    <property type="protein sequence ID" value="AT1G29890.1"/>
    <property type="gene ID" value="AT1G29890"/>
</dbReference>
<dbReference type="Gramene" id="AT1G29890.2">
    <molecule id="Q9FXG3-3"/>
    <property type="protein sequence ID" value="AT1G29890.2"/>
    <property type="gene ID" value="AT1G29890"/>
</dbReference>
<dbReference type="KEGG" id="ath:AT1G29890"/>
<dbReference type="Araport" id="AT1G29890"/>
<dbReference type="TAIR" id="AT1G29890">
    <property type="gene designation" value="RWA4"/>
</dbReference>
<dbReference type="eggNOG" id="KOG1699">
    <property type="taxonomic scope" value="Eukaryota"/>
</dbReference>
<dbReference type="InParanoid" id="Q9FXG3"/>
<dbReference type="OMA" id="LYCCSHI"/>
<dbReference type="PRO" id="PR:Q9FXG3"/>
<dbReference type="Proteomes" id="UP000006548">
    <property type="component" value="Chromosome 1"/>
</dbReference>
<dbReference type="ExpressionAtlas" id="Q9FXG3">
    <property type="expression patterns" value="baseline and differential"/>
</dbReference>
<dbReference type="GO" id="GO:0005794">
    <property type="term" value="C:Golgi apparatus"/>
    <property type="evidence" value="ECO:0000314"/>
    <property type="project" value="UniProtKB"/>
</dbReference>
<dbReference type="GO" id="GO:0000139">
    <property type="term" value="C:Golgi membrane"/>
    <property type="evidence" value="ECO:0007669"/>
    <property type="project" value="UniProtKB-SubCell"/>
</dbReference>
<dbReference type="GO" id="GO:0016491">
    <property type="term" value="F:oxidoreductase activity"/>
    <property type="evidence" value="ECO:0007669"/>
    <property type="project" value="UniProtKB-KW"/>
</dbReference>
<dbReference type="GO" id="GO:0016740">
    <property type="term" value="F:transferase activity"/>
    <property type="evidence" value="ECO:0007669"/>
    <property type="project" value="UniProtKB-KW"/>
</dbReference>
<dbReference type="GO" id="GO:0009834">
    <property type="term" value="P:plant-type secondary cell wall biogenesis"/>
    <property type="evidence" value="ECO:0000315"/>
    <property type="project" value="UniProtKB"/>
</dbReference>
<dbReference type="GO" id="GO:1990937">
    <property type="term" value="P:xylan acetylation"/>
    <property type="evidence" value="ECO:0000316"/>
    <property type="project" value="TAIR"/>
</dbReference>
<dbReference type="GO" id="GO:0045492">
    <property type="term" value="P:xylan biosynthetic process"/>
    <property type="evidence" value="ECO:0000315"/>
    <property type="project" value="UniProtKB"/>
</dbReference>
<dbReference type="GO" id="GO:0045491">
    <property type="term" value="P:xylan metabolic process"/>
    <property type="evidence" value="ECO:0000315"/>
    <property type="project" value="UniProtKB"/>
</dbReference>
<dbReference type="InterPro" id="IPR012419">
    <property type="entry name" value="Cas1_AcylTrans_dom"/>
</dbReference>
<dbReference type="PANTHER" id="PTHR13533">
    <property type="entry name" value="N-ACETYLNEURAMINATE 9-O-ACETYLTRANSFERASE"/>
    <property type="match status" value="1"/>
</dbReference>
<dbReference type="PANTHER" id="PTHR13533:SF47">
    <property type="entry name" value="PROTEIN REDUCED WALL ACETYLATION 3-RELATED"/>
    <property type="match status" value="1"/>
</dbReference>
<dbReference type="Pfam" id="PF07779">
    <property type="entry name" value="Cas1_AcylT"/>
    <property type="match status" value="1"/>
</dbReference>
<gene>
    <name evidence="6 7" type="primary">RWA4</name>
    <name evidence="10" type="ordered locus">At1g29890</name>
    <name evidence="9" type="ORF">F1N18.7</name>
</gene>
<sequence>MVVSQPITPGQVSFLLGVIPLMIAWLYSEFLEYRRSSFHAKVHSDKNLVELEMVTNKEDEGTVLMEGGLPRSASSKFYSSPIKTNLIRFLTLEDSFLLENRATLRAMAEFGAILLYFYICDRTSLIGQSQKNYSRDLFLFLFCLLIIVSAMTSLKKHTDKSPITGKSILYLNRHQTEEWKGWMQVLFLMYHYFAAVEFYNAIRVFIAGYVWMTGFGNFSYYYIRKDFSLARFTQMMWRLNFFVAFCCIILNNDYMLYYICPMHTLFTLMVYGALGIYSQYNEIASVMALKIASCFLVVILMWEIPGVFEIFWSPLAFLLGYTDPAKPDLPRLHEWHFRSGLDRYIWIIGMIYAYFHPTVERWMEKLEECDAKRRMSIKTSIIGISSFAGYLWYEYIYKLDKVTYNKYHPYTSWIPITVYICLRNCTQQLRRFSLTLFAWLGKITLETYISQFHIWLRSSVPNGQPKLLLSIIPEYPMLNFMLTTAIYVLVSVRLFELTNTLKSVFIPTKDDKRLLHNVIAMAAISFCLYIIGLILLLIPH</sequence>
<organism evidence="11">
    <name type="scientific">Arabidopsis thaliana</name>
    <name type="common">Mouse-ear cress</name>
    <dbReference type="NCBI Taxonomy" id="3702"/>
    <lineage>
        <taxon>Eukaryota</taxon>
        <taxon>Viridiplantae</taxon>
        <taxon>Streptophyta</taxon>
        <taxon>Embryophyta</taxon>
        <taxon>Tracheophyta</taxon>
        <taxon>Spermatophyta</taxon>
        <taxon>Magnoliopsida</taxon>
        <taxon>eudicotyledons</taxon>
        <taxon>Gunneridae</taxon>
        <taxon>Pentapetalae</taxon>
        <taxon>rosids</taxon>
        <taxon>malvids</taxon>
        <taxon>Brassicales</taxon>
        <taxon>Brassicaceae</taxon>
        <taxon>Camelineae</taxon>
        <taxon>Arabidopsis</taxon>
    </lineage>
</organism>
<comment type="function">
    <text evidence="4 5">Probable O-acetyltransferase involved in the acetylation of xylan during secondary wall biosynthesis.</text>
</comment>
<comment type="subcellular location">
    <subcellularLocation>
        <location evidence="4">Golgi apparatus membrane</location>
        <topology evidence="1">Multi-pass membrane protein</topology>
    </subcellularLocation>
</comment>
<comment type="alternative products">
    <event type="alternative splicing"/>
    <isoform>
        <id>Q9FXG3-1</id>
        <name>1</name>
        <sequence type="displayed"/>
    </isoform>
    <isoform>
        <id>Q9FXG3-2</id>
        <name>2</name>
        <sequence type="described" ref="VSP_057929"/>
    </isoform>
    <isoform>
        <id>Q9FXG3-3</id>
        <name>3</name>
        <sequence type="described" ref="VSP_057930 VSP_057931"/>
    </isoform>
</comment>
<comment type="tissue specificity">
    <text evidence="3 4">Expressed in cells undergoing secondary wall thickeningin a SND1-dependent manner, such as xylem cells and interfascicular fibers. Mostly expressed in the middle and bottom parts of the inflorescence stems (PubMed:21673009). Mainly observed in the more mature parts of inflorescence stems, but present ubiquitously (PubMed:21212300).</text>
</comment>
<comment type="disruption phenotype">
    <text evidence="3 4 5">No visible phenotype on cell wall acetylation in single mutant (PubMed:21212300). Severe growth phenotypes (e.g. dwarf and abnormal flower organs) associated with reduction in the secondary wall thickening and the stem mechanical strength in the quadruple mutant rwa1 rwa2 rwa3 rwa4 and characterized by reduced xylan acetylation and altered ratio of non-methylated to methylated glucuronic acid side chains. Absence of interfascicular fibers and xylem cells differentiation (PubMed:21673009, PubMed:24019426). The double mutant rwa2 rwa4 and triple mutants rwa2 rwa3 rwa4, rwa1 rwa3 rwa4 and rwa1 rwa2 rwa4 are also dwarfs with abnormal morphology. Altered O-acetylated xyloglucans (XyG) oligosaccharides (XyGOs) composition (PubMed:24019426).</text>
</comment>
<comment type="similarity">
    <text evidence="8">Belongs to the PC-esterase family. CASD1 subfamily.</text>
</comment>
<comment type="sequence caution" evidence="8">
    <conflict type="erroneous gene model prediction">
        <sequence resource="EMBL-CDS" id="AAG10607"/>
    </conflict>
</comment>
<accession>Q9FXG3</accession>
<accession>F4I360</accession>
<accession>F4I361</accession>
<evidence type="ECO:0000255" key="1"/>
<evidence type="ECO:0000255" key="2">
    <source>
        <dbReference type="PROSITE-ProRule" id="PRU00498"/>
    </source>
</evidence>
<evidence type="ECO:0000269" key="3">
    <source>
    </source>
</evidence>
<evidence type="ECO:0000269" key="4">
    <source>
    </source>
</evidence>
<evidence type="ECO:0000269" key="5">
    <source>
    </source>
</evidence>
<evidence type="ECO:0000303" key="6">
    <source>
    </source>
</evidence>
<evidence type="ECO:0000303" key="7">
    <source>
    </source>
</evidence>
<evidence type="ECO:0000305" key="8"/>
<evidence type="ECO:0000312" key="9">
    <source>
        <dbReference type="EMBL" id="AAG10607.1"/>
    </source>
</evidence>
<evidence type="ECO:0000312" key="10">
    <source>
        <dbReference type="EMBL" id="AEE31147.1"/>
    </source>
</evidence>
<evidence type="ECO:0000312" key="11">
    <source>
        <dbReference type="Proteomes" id="UP000006548"/>
    </source>
</evidence>
<proteinExistence type="evidence at transcript level"/>
<name>RWA4_ARATH</name>
<keyword id="KW-0025">Alternative splicing</keyword>
<keyword id="KW-0325">Glycoprotein</keyword>
<keyword id="KW-0333">Golgi apparatus</keyword>
<keyword id="KW-0472">Membrane</keyword>
<keyword id="KW-0560">Oxidoreductase</keyword>
<keyword id="KW-1185">Reference proteome</keyword>
<keyword id="KW-0808">Transferase</keyword>
<keyword id="KW-0812">Transmembrane</keyword>
<keyword id="KW-1133">Transmembrane helix</keyword>
<reference key="1">
    <citation type="journal article" date="2000" name="Nature">
        <title>Sequence and analysis of chromosome 1 of the plant Arabidopsis thaliana.</title>
        <authorList>
            <person name="Theologis A."/>
            <person name="Ecker J.R."/>
            <person name="Palm C.J."/>
            <person name="Federspiel N.A."/>
            <person name="Kaul S."/>
            <person name="White O."/>
            <person name="Alonso J."/>
            <person name="Altafi H."/>
            <person name="Araujo R."/>
            <person name="Bowman C.L."/>
            <person name="Brooks S.Y."/>
            <person name="Buehler E."/>
            <person name="Chan A."/>
            <person name="Chao Q."/>
            <person name="Chen H."/>
            <person name="Cheuk R.F."/>
            <person name="Chin C.W."/>
            <person name="Chung M.K."/>
            <person name="Conn L."/>
            <person name="Conway A.B."/>
            <person name="Conway A.R."/>
            <person name="Creasy T.H."/>
            <person name="Dewar K."/>
            <person name="Dunn P."/>
            <person name="Etgu P."/>
            <person name="Feldblyum T.V."/>
            <person name="Feng J.-D."/>
            <person name="Fong B."/>
            <person name="Fujii C.Y."/>
            <person name="Gill J.E."/>
            <person name="Goldsmith A.D."/>
            <person name="Haas B."/>
            <person name="Hansen N.F."/>
            <person name="Hughes B."/>
            <person name="Huizar L."/>
            <person name="Hunter J.L."/>
            <person name="Jenkins J."/>
            <person name="Johnson-Hopson C."/>
            <person name="Khan S."/>
            <person name="Khaykin E."/>
            <person name="Kim C.J."/>
            <person name="Koo H.L."/>
            <person name="Kremenetskaia I."/>
            <person name="Kurtz D.B."/>
            <person name="Kwan A."/>
            <person name="Lam B."/>
            <person name="Langin-Hooper S."/>
            <person name="Lee A."/>
            <person name="Lee J.M."/>
            <person name="Lenz C.A."/>
            <person name="Li J.H."/>
            <person name="Li Y.-P."/>
            <person name="Lin X."/>
            <person name="Liu S.X."/>
            <person name="Liu Z.A."/>
            <person name="Luros J.S."/>
            <person name="Maiti R."/>
            <person name="Marziali A."/>
            <person name="Militscher J."/>
            <person name="Miranda M."/>
            <person name="Nguyen M."/>
            <person name="Nierman W.C."/>
            <person name="Osborne B.I."/>
            <person name="Pai G."/>
            <person name="Peterson J."/>
            <person name="Pham P.K."/>
            <person name="Rizzo M."/>
            <person name="Rooney T."/>
            <person name="Rowley D."/>
            <person name="Sakano H."/>
            <person name="Salzberg S.L."/>
            <person name="Schwartz J.R."/>
            <person name="Shinn P."/>
            <person name="Southwick A.M."/>
            <person name="Sun H."/>
            <person name="Tallon L.J."/>
            <person name="Tambunga G."/>
            <person name="Toriumi M.J."/>
            <person name="Town C.D."/>
            <person name="Utterback T."/>
            <person name="Van Aken S."/>
            <person name="Vaysberg M."/>
            <person name="Vysotskaia V.S."/>
            <person name="Walker M."/>
            <person name="Wu D."/>
            <person name="Yu G."/>
            <person name="Fraser C.M."/>
            <person name="Venter J.C."/>
            <person name="Davis R.W."/>
        </authorList>
    </citation>
    <scope>NUCLEOTIDE SEQUENCE [LARGE SCALE GENOMIC DNA]</scope>
    <source>
        <strain>cv. Columbia</strain>
    </source>
</reference>
<reference key="2">
    <citation type="journal article" date="2017" name="Plant J.">
        <title>Araport11: a complete reannotation of the Arabidopsis thaliana reference genome.</title>
        <authorList>
            <person name="Cheng C.Y."/>
            <person name="Krishnakumar V."/>
            <person name="Chan A.P."/>
            <person name="Thibaud-Nissen F."/>
            <person name="Schobel S."/>
            <person name="Town C.D."/>
        </authorList>
    </citation>
    <scope>GENOME REANNOTATION</scope>
    <source>
        <strain>cv. Columbia</strain>
    </source>
</reference>
<reference key="3">
    <citation type="journal article" date="2004" name="Genome Res.">
        <title>Whole genome sequence comparisons and 'full-length' cDNA sequences: a combined approach to evaluate and improve Arabidopsis genome annotation.</title>
        <authorList>
            <person name="Castelli V."/>
            <person name="Aury J.-M."/>
            <person name="Jaillon O."/>
            <person name="Wincker P."/>
            <person name="Clepet C."/>
            <person name="Menard M."/>
            <person name="Cruaud C."/>
            <person name="Quetier F."/>
            <person name="Scarpelli C."/>
            <person name="Schaechter V."/>
            <person name="Temple G."/>
            <person name="Caboche M."/>
            <person name="Weissenbach J."/>
            <person name="Salanoubat M."/>
        </authorList>
    </citation>
    <scope>NUCLEOTIDE SEQUENCE [LARGE SCALE MRNA] (ISOFORM 2)</scope>
    <source>
        <strain>cv. Columbia</strain>
    </source>
</reference>
<reference key="4">
    <citation type="journal article" date="2011" name="Plant Cell Physiol.">
        <title>The four Arabidopsis reduced wall acetylation genes are expressed in secondary wall-containing cells and required for the acetylation of xylan.</title>
        <authorList>
            <person name="Lee C."/>
            <person name="Teng Q."/>
            <person name="Zhong R."/>
            <person name="Ye Z.H."/>
        </authorList>
    </citation>
    <scope>FUNCTION</scope>
    <scope>DISRUPTION PHENOTYPE</scope>
    <scope>TISSUE SPECIFICITY</scope>
    <scope>SUBCELLULAR LOCATION</scope>
    <scope>GENE FAMILY</scope>
    <scope>NOMENCLATURE</scope>
</reference>
<reference key="5">
    <citation type="journal article" date="2011" name="Plant Physiol.">
        <title>Loss-of-function mutation of REDUCED WALL ACETYLATION2 in Arabidopsis leads to reduced cell wall acetylation and increased resistance to Botrytis cinerea.</title>
        <authorList>
            <person name="Manabe Y."/>
            <person name="Nafisi M."/>
            <person name="Verhertbruggen Y."/>
            <person name="Orfila C."/>
            <person name="Gille S."/>
            <person name="Rautengarten C."/>
            <person name="Cherk C."/>
            <person name="Marcus S.E."/>
            <person name="Somerville S."/>
            <person name="Pauly M."/>
            <person name="Knox J.P."/>
            <person name="Sakuragi Y."/>
            <person name="Scheller H.V."/>
        </authorList>
    </citation>
    <scope>DISRUPTION PHENOTYPE</scope>
    <scope>TISSUE SPECIFICITY</scope>
    <scope>GENE FAMILY</scope>
    <scope>NOMENCLATURE</scope>
    <source>
        <strain>cv. Columbia</strain>
    </source>
</reference>
<reference key="6">
    <citation type="journal article" date="2013" name="Plant Physiol.">
        <title>Reduced wall acetylation proteins play vital and distinct roles in cell wall O-acetylation in Arabidopsis.</title>
        <authorList>
            <person name="Manabe Y."/>
            <person name="Verhertbruggen Y."/>
            <person name="Gille S."/>
            <person name="Harholt J."/>
            <person name="Chong S.-L."/>
            <person name="Pawar P.M.-A."/>
            <person name="Mellerowicz E.J."/>
            <person name="Tenkanen M."/>
            <person name="Cheng K."/>
            <person name="Pauly M."/>
            <person name="Scheller H.V."/>
        </authorList>
    </citation>
    <scope>FUNCTION</scope>
    <scope>DISRUPTION PHENOTYPE</scope>
    <scope>GENE FAMILY</scope>
</reference>
<feature type="chain" id="PRO_0000434398" description="Protein REDUCED WALL ACETYLATION 4">
    <location>
        <begin position="1"/>
        <end position="540"/>
    </location>
</feature>
<feature type="transmembrane region" description="Helical" evidence="1">
    <location>
        <begin position="7"/>
        <end position="27"/>
    </location>
</feature>
<feature type="transmembrane region" description="Helical" evidence="1">
    <location>
        <begin position="106"/>
        <end position="126"/>
    </location>
</feature>
<feature type="transmembrane region" description="Helical" evidence="1">
    <location>
        <begin position="137"/>
        <end position="157"/>
    </location>
</feature>
<feature type="transmembrane region" description="Helical" evidence="1">
    <location>
        <begin position="182"/>
        <end position="202"/>
    </location>
</feature>
<feature type="transmembrane region" description="Helical" evidence="1">
    <location>
        <begin position="203"/>
        <end position="223"/>
    </location>
</feature>
<feature type="transmembrane region" description="Helical" evidence="1">
    <location>
        <begin position="235"/>
        <end position="252"/>
    </location>
</feature>
<feature type="transmembrane region" description="Helical" evidence="1">
    <location>
        <begin position="256"/>
        <end position="276"/>
    </location>
</feature>
<feature type="transmembrane region" description="Helical" evidence="1">
    <location>
        <begin position="291"/>
        <end position="311"/>
    </location>
</feature>
<feature type="transmembrane region" description="Helical" evidence="1">
    <location>
        <begin position="340"/>
        <end position="359"/>
    </location>
</feature>
<feature type="transmembrane region" description="Helical" evidence="1">
    <location>
        <begin position="377"/>
        <end position="397"/>
    </location>
</feature>
<feature type="transmembrane region" description="Helical" evidence="1">
    <location>
        <begin position="407"/>
        <end position="426"/>
    </location>
</feature>
<feature type="transmembrane region" description="Helical" evidence="1">
    <location>
        <begin position="436"/>
        <end position="456"/>
    </location>
</feature>
<feature type="transmembrane region" description="Helical" evidence="1">
    <location>
        <begin position="470"/>
        <end position="490"/>
    </location>
</feature>
<feature type="transmembrane region" description="Helical" evidence="1">
    <location>
        <begin position="518"/>
        <end position="538"/>
    </location>
</feature>
<feature type="glycosylation site" description="N-linked (GlcNAc...) asparagine" evidence="2">
    <location>
        <position position="132"/>
    </location>
</feature>
<feature type="splice variant" id="VSP_057929" description="In isoform 2.">
    <original>MVVSQPITPGQVSFLLGVIPLMIAWLYSEFLEYRRSSFHAKVHSDKNLVELEMVTNKEDEGTVLMEGGLPRSASSKFYSSPIKTNLI</original>
    <variation>MFSSHNIFLTIGIVFIR</variation>
    <location>
        <begin position="1"/>
        <end position="87"/>
    </location>
</feature>
<feature type="splice variant" id="VSP_057930" description="In isoform 3.">
    <original>M</original>
    <variation>MDPVDM</variation>
    <location>
        <position position="1"/>
    </location>
</feature>
<feature type="splice variant" id="VSP_057931" description="In isoform 3.">
    <original>T</original>
    <variation>TQVRSTIFDHHSLFSLPCDVLLESTMSFKAQDFYESFYLI</variation>
    <location>
        <position position="233"/>
    </location>
</feature>
<protein>
    <recommendedName>
        <fullName evidence="6 7">Protein REDUCED WALL ACETYLATION 4</fullName>
        <ecNumber evidence="8">2.3.1.-</ecNumber>
    </recommendedName>
</protein>